<reference key="1">
    <citation type="journal article" date="2005" name="BMC Genomics">
        <title>Characterization of 954 bovine full-CDS cDNA sequences.</title>
        <authorList>
            <person name="Harhay G.P."/>
            <person name="Sonstegard T.S."/>
            <person name="Keele J.W."/>
            <person name="Heaton M.P."/>
            <person name="Clawson M.L."/>
            <person name="Snelling W.M."/>
            <person name="Wiedmann R.T."/>
            <person name="Van Tassell C.P."/>
            <person name="Smith T.P.L."/>
        </authorList>
    </citation>
    <scope>NUCLEOTIDE SEQUENCE [LARGE SCALE MRNA]</scope>
</reference>
<reference key="2">
    <citation type="submission" date="2005-11" db="EMBL/GenBank/DDBJ databases">
        <authorList>
            <consortium name="NIH - Mammalian Gene Collection (MGC) project"/>
        </authorList>
    </citation>
    <scope>NUCLEOTIDE SEQUENCE [LARGE SCALE MRNA]</scope>
    <source>
        <strain>Crossbred X Angus</strain>
        <tissue>Liver</tissue>
    </source>
</reference>
<accession>Q5E9N4</accession>
<accession>Q32KQ6</accession>
<keyword id="KW-0007">Acetylation</keyword>
<keyword id="KW-0032">Aminotransferase</keyword>
<keyword id="KW-0496">Mitochondrion</keyword>
<keyword id="KW-0663">Pyridoxal phosphate</keyword>
<keyword id="KW-1185">Reference proteome</keyword>
<keyword id="KW-0808">Transferase</keyword>
<keyword id="KW-0809">Transit peptide</keyword>
<dbReference type="EC" id="2.6.1.39" evidence="3"/>
<dbReference type="EC" id="2.6.1.4" evidence="3"/>
<dbReference type="EC" id="2.6.1.63" evidence="3"/>
<dbReference type="EC" id="2.6.1.7" evidence="3"/>
<dbReference type="EC" id="2.6.1.73" evidence="3"/>
<dbReference type="EMBL" id="BT020844">
    <property type="protein sequence ID" value="AAX08861.1"/>
    <property type="molecule type" value="mRNA"/>
</dbReference>
<dbReference type="EMBL" id="BT020886">
    <property type="protein sequence ID" value="AAX08903.1"/>
    <property type="molecule type" value="mRNA"/>
</dbReference>
<dbReference type="EMBL" id="BC109974">
    <property type="protein sequence ID" value="AAI09975.1"/>
    <property type="molecule type" value="mRNA"/>
</dbReference>
<dbReference type="RefSeq" id="NP_001015551.1">
    <property type="nucleotide sequence ID" value="NM_001015551.1"/>
</dbReference>
<dbReference type="SMR" id="Q5E9N4"/>
<dbReference type="FunCoup" id="Q5E9N4">
    <property type="interactions" value="131"/>
</dbReference>
<dbReference type="STRING" id="9913.ENSBTAP00000057316"/>
<dbReference type="PaxDb" id="9913-ENSBTAP00000013637"/>
<dbReference type="GeneID" id="508929"/>
<dbReference type="KEGG" id="bta:508929"/>
<dbReference type="CTD" id="51166"/>
<dbReference type="eggNOG" id="KOG0634">
    <property type="taxonomic scope" value="Eukaryota"/>
</dbReference>
<dbReference type="InParanoid" id="Q5E9N4"/>
<dbReference type="OrthoDB" id="691673at2759"/>
<dbReference type="UniPathway" id="UPA00868">
    <property type="reaction ID" value="UER00838"/>
</dbReference>
<dbReference type="Proteomes" id="UP000009136">
    <property type="component" value="Unplaced"/>
</dbReference>
<dbReference type="GO" id="GO:0005739">
    <property type="term" value="C:mitochondrion"/>
    <property type="evidence" value="ECO:0007669"/>
    <property type="project" value="UniProtKB-SubCell"/>
</dbReference>
<dbReference type="GO" id="GO:0047536">
    <property type="term" value="F:2-aminoadipate transaminase activity"/>
    <property type="evidence" value="ECO:0000250"/>
    <property type="project" value="UniProtKB"/>
</dbReference>
<dbReference type="GO" id="GO:0047958">
    <property type="term" value="F:glycine:2-oxoglutarate aminotransferase activity"/>
    <property type="evidence" value="ECO:0000250"/>
    <property type="project" value="UniProtKB"/>
</dbReference>
<dbReference type="GO" id="GO:0047315">
    <property type="term" value="F:kynurenine-glyoxylate transaminase activity"/>
    <property type="evidence" value="ECO:0000250"/>
    <property type="project" value="UniProtKB"/>
</dbReference>
<dbReference type="GO" id="GO:0016212">
    <property type="term" value="F:kynurenine-oxoglutarate transaminase activity"/>
    <property type="evidence" value="ECO:0000250"/>
    <property type="project" value="UniProtKB"/>
</dbReference>
<dbReference type="GO" id="GO:0050094">
    <property type="term" value="F:methionine-glyoxylate transaminase activity"/>
    <property type="evidence" value="ECO:0000250"/>
    <property type="project" value="UniProtKB"/>
</dbReference>
<dbReference type="GO" id="GO:0030170">
    <property type="term" value="F:pyridoxal phosphate binding"/>
    <property type="evidence" value="ECO:0007669"/>
    <property type="project" value="InterPro"/>
</dbReference>
<dbReference type="GO" id="GO:0006103">
    <property type="term" value="P:2-oxoglutarate metabolic process"/>
    <property type="evidence" value="ECO:0000250"/>
    <property type="project" value="UniProtKB"/>
</dbReference>
<dbReference type="GO" id="GO:1901605">
    <property type="term" value="P:alpha-amino acid metabolic process"/>
    <property type="evidence" value="ECO:0000318"/>
    <property type="project" value="GO_Central"/>
</dbReference>
<dbReference type="GO" id="GO:0009058">
    <property type="term" value="P:biosynthetic process"/>
    <property type="evidence" value="ECO:0007669"/>
    <property type="project" value="InterPro"/>
</dbReference>
<dbReference type="GO" id="GO:0006536">
    <property type="term" value="P:glutamate metabolic process"/>
    <property type="evidence" value="ECO:0000250"/>
    <property type="project" value="UniProtKB"/>
</dbReference>
<dbReference type="GO" id="GO:0070189">
    <property type="term" value="P:kynurenine metabolic process"/>
    <property type="evidence" value="ECO:0000250"/>
    <property type="project" value="UniProtKB"/>
</dbReference>
<dbReference type="GO" id="GO:0033512">
    <property type="term" value="P:L-lysine catabolic process to acetyl-CoA via saccharopine"/>
    <property type="evidence" value="ECO:0007669"/>
    <property type="project" value="UniProtKB-UniPathway"/>
</dbReference>
<dbReference type="CDD" id="cd00609">
    <property type="entry name" value="AAT_like"/>
    <property type="match status" value="1"/>
</dbReference>
<dbReference type="FunFam" id="3.40.640.10:FF:000071">
    <property type="entry name" value="Kynurenine/alpha-aminoadipate aminotransferase, mitochondrial"/>
    <property type="match status" value="1"/>
</dbReference>
<dbReference type="FunFam" id="3.90.1150.10:FF:000166">
    <property type="entry name" value="Kynurenine/alpha-aminoadipate aminotransferase, mitochondrial"/>
    <property type="match status" value="1"/>
</dbReference>
<dbReference type="Gene3D" id="3.40.640.10">
    <property type="entry name" value="Type I PLP-dependent aspartate aminotransferase-like (Major domain)"/>
    <property type="match status" value="1"/>
</dbReference>
<dbReference type="InterPro" id="IPR004839">
    <property type="entry name" value="Aminotransferase_I/II_large"/>
</dbReference>
<dbReference type="InterPro" id="IPR050859">
    <property type="entry name" value="Class-I_PLP-dep_aminotransf"/>
</dbReference>
<dbReference type="InterPro" id="IPR015424">
    <property type="entry name" value="PyrdxlP-dep_Trfase"/>
</dbReference>
<dbReference type="InterPro" id="IPR015421">
    <property type="entry name" value="PyrdxlP-dep_Trfase_major"/>
</dbReference>
<dbReference type="PANTHER" id="PTHR42790">
    <property type="entry name" value="AMINOTRANSFERASE"/>
    <property type="match status" value="1"/>
</dbReference>
<dbReference type="PANTHER" id="PTHR42790:SF19">
    <property type="entry name" value="KYNURENINE_ALPHA-AMINOADIPATE AMINOTRANSFERASE, MITOCHONDRIAL"/>
    <property type="match status" value="1"/>
</dbReference>
<dbReference type="Pfam" id="PF00155">
    <property type="entry name" value="Aminotran_1_2"/>
    <property type="match status" value="1"/>
</dbReference>
<dbReference type="SUPFAM" id="SSF53383">
    <property type="entry name" value="PLP-dependent transferases"/>
    <property type="match status" value="1"/>
</dbReference>
<organism>
    <name type="scientific">Bos taurus</name>
    <name type="common">Bovine</name>
    <dbReference type="NCBI Taxonomy" id="9913"/>
    <lineage>
        <taxon>Eukaryota</taxon>
        <taxon>Metazoa</taxon>
        <taxon>Chordata</taxon>
        <taxon>Craniata</taxon>
        <taxon>Vertebrata</taxon>
        <taxon>Euteleostomi</taxon>
        <taxon>Mammalia</taxon>
        <taxon>Eutheria</taxon>
        <taxon>Laurasiatheria</taxon>
        <taxon>Artiodactyla</taxon>
        <taxon>Ruminantia</taxon>
        <taxon>Pecora</taxon>
        <taxon>Bovidae</taxon>
        <taxon>Bovinae</taxon>
        <taxon>Bos</taxon>
    </lineage>
</organism>
<comment type="function">
    <text evidence="3">Transaminase with broad substrate specificity. Has transaminase activity towards aminoadipate, kynurenine, methionine and glutamate. Shows activity also towards tryptophan, aspartate and hydroxykynurenine. Accepts a variety of oxo-acids as amino-group acceptors, with a preference for 2-oxoglutarate, 2-oxocaproic acid, phenylpyruvate and alpha-oxo-gamma-methiol butyric acid. Can also use glyoxylate as amino-group acceptor (in vitro) (By similarity).</text>
</comment>
<comment type="catalytic activity">
    <reaction evidence="3">
        <text>L-kynurenine + 2-oxoglutarate = kynurenate + L-glutamate + H2O</text>
        <dbReference type="Rhea" id="RHEA:65560"/>
        <dbReference type="ChEBI" id="CHEBI:15377"/>
        <dbReference type="ChEBI" id="CHEBI:16810"/>
        <dbReference type="ChEBI" id="CHEBI:29985"/>
        <dbReference type="ChEBI" id="CHEBI:57959"/>
        <dbReference type="ChEBI" id="CHEBI:58454"/>
        <dbReference type="EC" id="2.6.1.7"/>
    </reaction>
    <physiologicalReaction direction="left-to-right" evidence="3">
        <dbReference type="Rhea" id="RHEA:65561"/>
    </physiologicalReaction>
</comment>
<comment type="catalytic activity">
    <reaction evidence="3">
        <text>L-2-aminoadipate + 2-oxoglutarate = 2-oxoadipate + L-glutamate</text>
        <dbReference type="Rhea" id="RHEA:12601"/>
        <dbReference type="ChEBI" id="CHEBI:16810"/>
        <dbReference type="ChEBI" id="CHEBI:29985"/>
        <dbReference type="ChEBI" id="CHEBI:57499"/>
        <dbReference type="ChEBI" id="CHEBI:58672"/>
        <dbReference type="EC" id="2.6.1.39"/>
    </reaction>
</comment>
<comment type="catalytic activity">
    <reaction evidence="3">
        <text>glycine + 2-oxoglutarate = glyoxylate + L-glutamate</text>
        <dbReference type="Rhea" id="RHEA:14089"/>
        <dbReference type="ChEBI" id="CHEBI:16810"/>
        <dbReference type="ChEBI" id="CHEBI:29985"/>
        <dbReference type="ChEBI" id="CHEBI:36655"/>
        <dbReference type="ChEBI" id="CHEBI:57305"/>
        <dbReference type="EC" id="2.6.1.4"/>
    </reaction>
</comment>
<comment type="catalytic activity">
    <reaction evidence="3">
        <text>L-kynurenine + glyoxylate = kynurenate + glycine + H2O</text>
        <dbReference type="Rhea" id="RHEA:65896"/>
        <dbReference type="ChEBI" id="CHEBI:15377"/>
        <dbReference type="ChEBI" id="CHEBI:36655"/>
        <dbReference type="ChEBI" id="CHEBI:57305"/>
        <dbReference type="ChEBI" id="CHEBI:57959"/>
        <dbReference type="ChEBI" id="CHEBI:58454"/>
        <dbReference type="EC" id="2.6.1.63"/>
    </reaction>
    <physiologicalReaction direction="left-to-right" evidence="3">
        <dbReference type="Rhea" id="RHEA:65897"/>
    </physiologicalReaction>
</comment>
<comment type="catalytic activity">
    <reaction evidence="3">
        <text>3-hydroxy-L-kynurenine + glyoxylate = xanthurenate + glycine + H2O</text>
        <dbReference type="Rhea" id="RHEA:65900"/>
        <dbReference type="ChEBI" id="CHEBI:15377"/>
        <dbReference type="ChEBI" id="CHEBI:36655"/>
        <dbReference type="ChEBI" id="CHEBI:57305"/>
        <dbReference type="ChEBI" id="CHEBI:58125"/>
        <dbReference type="ChEBI" id="CHEBI:71201"/>
        <dbReference type="EC" id="2.6.1.63"/>
    </reaction>
</comment>
<comment type="catalytic activity">
    <reaction evidence="3">
        <text>2-oxohexanoate + L-kynurenine = L-2-aminohexanoate + kynurenate + H2O</text>
        <dbReference type="Rhea" id="RHEA:66060"/>
        <dbReference type="ChEBI" id="CHEBI:15377"/>
        <dbReference type="ChEBI" id="CHEBI:35177"/>
        <dbReference type="ChEBI" id="CHEBI:57959"/>
        <dbReference type="ChEBI" id="CHEBI:58454"/>
        <dbReference type="ChEBI" id="CHEBI:58455"/>
    </reaction>
    <physiologicalReaction direction="left-to-right" evidence="3">
        <dbReference type="Rhea" id="RHEA:66061"/>
    </physiologicalReaction>
</comment>
<comment type="catalytic activity">
    <reaction evidence="3">
        <text>3-phenylpyruvate + L-kynurenine = kynurenate + L-phenylalanine + H2O</text>
        <dbReference type="Rhea" id="RHEA:66092"/>
        <dbReference type="ChEBI" id="CHEBI:15377"/>
        <dbReference type="ChEBI" id="CHEBI:18005"/>
        <dbReference type="ChEBI" id="CHEBI:57959"/>
        <dbReference type="ChEBI" id="CHEBI:58095"/>
        <dbReference type="ChEBI" id="CHEBI:58454"/>
    </reaction>
    <physiologicalReaction direction="left-to-right" evidence="3">
        <dbReference type="Rhea" id="RHEA:66093"/>
    </physiologicalReaction>
</comment>
<comment type="catalytic activity">
    <reaction evidence="3">
        <text>4-methylsulfanyl-2-oxobutanoate + L-kynurenine = kynurenate + L-methionine + H2O</text>
        <dbReference type="Rhea" id="RHEA:69096"/>
        <dbReference type="ChEBI" id="CHEBI:15377"/>
        <dbReference type="ChEBI" id="CHEBI:16723"/>
        <dbReference type="ChEBI" id="CHEBI:57844"/>
        <dbReference type="ChEBI" id="CHEBI:57959"/>
        <dbReference type="ChEBI" id="CHEBI:58454"/>
    </reaction>
    <physiologicalReaction direction="left-to-right" evidence="3">
        <dbReference type="Rhea" id="RHEA:69097"/>
    </physiologicalReaction>
</comment>
<comment type="catalytic activity">
    <reaction evidence="3">
        <text>2-oxo-3-sulfanylpropanoate + L-kynurenine = kynurenate + L-cysteine + H2O</text>
        <dbReference type="Rhea" id="RHEA:69104"/>
        <dbReference type="ChEBI" id="CHEBI:15377"/>
        <dbReference type="ChEBI" id="CHEBI:35235"/>
        <dbReference type="ChEBI" id="CHEBI:57678"/>
        <dbReference type="ChEBI" id="CHEBI:57959"/>
        <dbReference type="ChEBI" id="CHEBI:58454"/>
    </reaction>
    <physiologicalReaction direction="left-to-right" evidence="3">
        <dbReference type="Rhea" id="RHEA:69105"/>
    </physiologicalReaction>
</comment>
<comment type="catalytic activity">
    <reaction evidence="3">
        <text>indole-3-pyruvate + L-kynurenine = kynurenate + L-tryptophan + H2O</text>
        <dbReference type="Rhea" id="RHEA:66052"/>
        <dbReference type="ChEBI" id="CHEBI:15377"/>
        <dbReference type="ChEBI" id="CHEBI:17640"/>
        <dbReference type="ChEBI" id="CHEBI:57912"/>
        <dbReference type="ChEBI" id="CHEBI:57959"/>
        <dbReference type="ChEBI" id="CHEBI:58454"/>
    </reaction>
    <physiologicalReaction direction="left-to-right" evidence="3">
        <dbReference type="Rhea" id="RHEA:66053"/>
    </physiologicalReaction>
</comment>
<comment type="catalytic activity">
    <reaction evidence="3">
        <text>2-oxopentanoate + L-kynurenine = L-2-aminopentanoate + kynurenate + H2O</text>
        <dbReference type="Rhea" id="RHEA:66076"/>
        <dbReference type="ChEBI" id="CHEBI:15377"/>
        <dbReference type="ChEBI" id="CHEBI:28644"/>
        <dbReference type="ChEBI" id="CHEBI:57959"/>
        <dbReference type="ChEBI" id="CHEBI:58441"/>
        <dbReference type="ChEBI" id="CHEBI:58454"/>
    </reaction>
    <physiologicalReaction direction="left-to-right" evidence="3">
        <dbReference type="Rhea" id="RHEA:66077"/>
    </physiologicalReaction>
</comment>
<comment type="catalytic activity">
    <reaction evidence="3">
        <text>4-methyl-2-oxopentanoate + L-kynurenine = kynurenate + L-leucine + H2O</text>
        <dbReference type="Rhea" id="RHEA:66068"/>
        <dbReference type="ChEBI" id="CHEBI:15377"/>
        <dbReference type="ChEBI" id="CHEBI:17865"/>
        <dbReference type="ChEBI" id="CHEBI:57427"/>
        <dbReference type="ChEBI" id="CHEBI:57959"/>
        <dbReference type="ChEBI" id="CHEBI:58454"/>
    </reaction>
    <physiologicalReaction direction="left-to-right" evidence="3">
        <dbReference type="Rhea" id="RHEA:66069"/>
    </physiologicalReaction>
</comment>
<comment type="catalytic activity">
    <reaction evidence="3">
        <text>glyoxylate + L-methionine = 4-methylsulfanyl-2-oxobutanoate + glycine</text>
        <dbReference type="Rhea" id="RHEA:22884"/>
        <dbReference type="ChEBI" id="CHEBI:16723"/>
        <dbReference type="ChEBI" id="CHEBI:36655"/>
        <dbReference type="ChEBI" id="CHEBI:57305"/>
        <dbReference type="ChEBI" id="CHEBI:57844"/>
        <dbReference type="EC" id="2.6.1.73"/>
    </reaction>
</comment>
<comment type="catalytic activity">
    <reaction evidence="3">
        <text>L-2-aminoadipate + glyoxylate = 2-oxoadipate + glycine</text>
        <dbReference type="Rhea" id="RHEA:69112"/>
        <dbReference type="ChEBI" id="CHEBI:36655"/>
        <dbReference type="ChEBI" id="CHEBI:57305"/>
        <dbReference type="ChEBI" id="CHEBI:57499"/>
        <dbReference type="ChEBI" id="CHEBI:58672"/>
    </reaction>
    <physiologicalReaction direction="left-to-right" evidence="3">
        <dbReference type="Rhea" id="RHEA:69113"/>
    </physiologicalReaction>
</comment>
<comment type="catalytic activity">
    <reaction evidence="3">
        <text>L-tyrosine + glyoxylate = 3-(4-hydroxyphenyl)pyruvate + glycine</text>
        <dbReference type="Rhea" id="RHEA:69116"/>
        <dbReference type="ChEBI" id="CHEBI:36242"/>
        <dbReference type="ChEBI" id="CHEBI:36655"/>
        <dbReference type="ChEBI" id="CHEBI:57305"/>
        <dbReference type="ChEBI" id="CHEBI:58315"/>
    </reaction>
</comment>
<comment type="catalytic activity">
    <reaction evidence="3">
        <text>glyoxylate + L-phenylalanine = 3-phenylpyruvate + glycine</text>
        <dbReference type="Rhea" id="RHEA:69120"/>
        <dbReference type="ChEBI" id="CHEBI:18005"/>
        <dbReference type="ChEBI" id="CHEBI:36655"/>
        <dbReference type="ChEBI" id="CHEBI:57305"/>
        <dbReference type="ChEBI" id="CHEBI:58095"/>
    </reaction>
</comment>
<comment type="catalytic activity">
    <reaction evidence="3">
        <text>L-tryptophan + glyoxylate = indole-3-pyruvate + glycine</text>
        <dbReference type="Rhea" id="RHEA:69124"/>
        <dbReference type="ChEBI" id="CHEBI:17640"/>
        <dbReference type="ChEBI" id="CHEBI:36655"/>
        <dbReference type="ChEBI" id="CHEBI:57305"/>
        <dbReference type="ChEBI" id="CHEBI:57912"/>
    </reaction>
</comment>
<comment type="catalytic activity">
    <reaction evidence="3">
        <text>L-leucine + glyoxylate = 4-methyl-2-oxopentanoate + glycine</text>
        <dbReference type="Rhea" id="RHEA:69128"/>
        <dbReference type="ChEBI" id="CHEBI:17865"/>
        <dbReference type="ChEBI" id="CHEBI:36655"/>
        <dbReference type="ChEBI" id="CHEBI:57305"/>
        <dbReference type="ChEBI" id="CHEBI:57427"/>
    </reaction>
</comment>
<comment type="catalytic activity">
    <reaction evidence="2">
        <text>2-oxobutanoate + L-kynurenine = (2S)-2-aminobutanoate + kynurenate + H2O</text>
        <dbReference type="Rhea" id="RHEA:66044"/>
        <dbReference type="ChEBI" id="CHEBI:15377"/>
        <dbReference type="ChEBI" id="CHEBI:16763"/>
        <dbReference type="ChEBI" id="CHEBI:57959"/>
        <dbReference type="ChEBI" id="CHEBI:58454"/>
        <dbReference type="ChEBI" id="CHEBI:74359"/>
    </reaction>
    <physiologicalReaction direction="left-to-right" evidence="2">
        <dbReference type="Rhea" id="RHEA:66045"/>
    </physiologicalReaction>
</comment>
<comment type="catalytic activity">
    <reaction evidence="2">
        <text>2-oxoadipate + L-kynurenine = L-2-aminoadipate + kynurenate + H2O</text>
        <dbReference type="Rhea" id="RHEA:70047"/>
        <dbReference type="ChEBI" id="CHEBI:15377"/>
        <dbReference type="ChEBI" id="CHEBI:57499"/>
        <dbReference type="ChEBI" id="CHEBI:57959"/>
        <dbReference type="ChEBI" id="CHEBI:58454"/>
        <dbReference type="ChEBI" id="CHEBI:58672"/>
    </reaction>
    <physiologicalReaction direction="left-to-right" evidence="2">
        <dbReference type="Rhea" id="RHEA:70048"/>
    </physiologicalReaction>
</comment>
<comment type="cofactor">
    <cofactor evidence="1">
        <name>pyridoxal 5'-phosphate</name>
        <dbReference type="ChEBI" id="CHEBI:597326"/>
    </cofactor>
</comment>
<comment type="pathway">
    <text>Amino-acid degradation; L-lysine degradation via saccharopine pathway; glutaryl-CoA from L-lysine: step 4/6.</text>
</comment>
<comment type="subunit">
    <text evidence="1">Homodimer.</text>
</comment>
<comment type="subcellular location">
    <subcellularLocation>
        <location evidence="7">Mitochondrion</location>
    </subcellularLocation>
</comment>
<comment type="similarity">
    <text evidence="7">Belongs to the class-I pyridoxal-phosphate-dependent aminotransferase family.</text>
</comment>
<proteinExistence type="evidence at transcript level"/>
<sequence>MNYARFITATSAARKPSTIRVMTEILSKAPKSVISLATGAPNPNTFPFKTAVITIENGKPIQFNEQMMKRALQYSQSAGIPELLSWLKQLQVKLHNPPTIHYAPTQGQMDLCVTCGSQEGLCKVFEMIVNPGDNILVNEPIYSGTIHALQPLGCNMINVSSDEHGIIPDSLREILSKWKPEDSKNPKKNSPKFLYTVPNGNNPSGNSLTAERKREIYELARKYDFLIIEDDPYYFMQFNKPWAPTFLSMDEDGRVIRADSFSKVLSSGLRIGFITGPKPLIERIVLHIQVSTMHPSTFAQLLVSQLLYQWGEEGFLGHVDRVIDFYRKQRDALMAAADKWLSGLAEWHVPTAGMFLWVKIKGIHDVRKLIEEKAFKKEIFMLPGCGFYTDSSAPCPYFRASFSSASPEQMDLAFQRLAQLIKESL</sequence>
<name>AADAT_BOVIN</name>
<evidence type="ECO:0000250" key="1"/>
<evidence type="ECO:0000250" key="2">
    <source>
        <dbReference type="UniProtKB" id="Q64602"/>
    </source>
</evidence>
<evidence type="ECO:0000250" key="3">
    <source>
        <dbReference type="UniProtKB" id="Q8N5Z0"/>
    </source>
</evidence>
<evidence type="ECO:0000250" key="4">
    <source>
        <dbReference type="UniProtKB" id="Q9WVM8"/>
    </source>
</evidence>
<evidence type="ECO:0000255" key="5"/>
<evidence type="ECO:0000256" key="6">
    <source>
        <dbReference type="SAM" id="MobiDB-lite"/>
    </source>
</evidence>
<evidence type="ECO:0000305" key="7"/>
<feature type="transit peptide" description="Mitochondrion" evidence="5">
    <location>
        <begin position="1"/>
        <end position="29"/>
    </location>
</feature>
<feature type="chain" id="PRO_0000244427" description="Kynurenine/alpha-aminoadipate aminotransferase, mitochondrial">
    <location>
        <begin position="30"/>
        <end position="425"/>
    </location>
</feature>
<feature type="region of interest" description="Disordered" evidence="6">
    <location>
        <begin position="178"/>
        <end position="208"/>
    </location>
</feature>
<feature type="compositionally biased region" description="Polar residues" evidence="6">
    <location>
        <begin position="198"/>
        <end position="208"/>
    </location>
</feature>
<feature type="binding site" evidence="1">
    <location>
        <position position="20"/>
    </location>
    <ligand>
        <name>substrate</name>
    </ligand>
</feature>
<feature type="binding site" evidence="1">
    <location>
        <position position="74"/>
    </location>
    <ligand>
        <name>substrate</name>
    </ligand>
</feature>
<feature type="binding site" evidence="1">
    <location>
        <position position="142"/>
    </location>
    <ligand>
        <name>substrate</name>
    </ligand>
</feature>
<feature type="binding site" evidence="1">
    <location>
        <position position="202"/>
    </location>
    <ligand>
        <name>substrate</name>
    </ligand>
</feature>
<feature type="binding site" evidence="1">
    <location>
        <position position="399"/>
    </location>
    <ligand>
        <name>substrate</name>
    </ligand>
</feature>
<feature type="modified residue" description="N6-acetyllysine" evidence="4">
    <location>
        <position position="69"/>
    </location>
</feature>
<feature type="modified residue" description="N6-acetyllysine" evidence="4">
    <location>
        <position position="179"/>
    </location>
</feature>
<feature type="modified residue" description="N6-(pyridoxal phosphate)lysine; alternate" evidence="1">
    <location>
        <position position="263"/>
    </location>
</feature>
<feature type="modified residue" description="N6-acetyllysine; alternate" evidence="4">
    <location>
        <position position="263"/>
    </location>
</feature>
<feature type="modified residue" description="N6-succinyllysine; alternate" evidence="4">
    <location>
        <position position="263"/>
    </location>
</feature>
<feature type="modified residue" description="N6-acetyllysine; alternate" evidence="4">
    <location>
        <position position="339"/>
    </location>
</feature>
<feature type="modified residue" description="N6-succinyllysine; alternate" evidence="4">
    <location>
        <position position="339"/>
    </location>
</feature>
<feature type="modified residue" description="N6-acetyllysine" evidence="4">
    <location>
        <position position="422"/>
    </location>
</feature>
<feature type="sequence conflict" description="In Ref. 2; AAI09975." evidence="7" ref="2">
    <original>L</original>
    <variation>I</variation>
    <location>
        <position position="111"/>
    </location>
</feature>
<feature type="sequence conflict" description="In Ref. 2; AAI09975." evidence="7" ref="2">
    <original>L</original>
    <variation>I</variation>
    <location>
        <position position="420"/>
    </location>
</feature>
<protein>
    <recommendedName>
        <fullName evidence="3">Kynurenine/alpha-aminoadipate aminotransferase, mitochondrial</fullName>
        <shortName>KAT/AadAT</shortName>
    </recommendedName>
    <alternativeName>
        <fullName>2-aminoadipate aminotransferase</fullName>
    </alternativeName>
    <alternativeName>
        <fullName>2-aminoadipate transaminase</fullName>
        <ecNumber evidence="3">2.6.1.39</ecNumber>
    </alternativeName>
    <alternativeName>
        <fullName>Alpha-aminoadipate aminotransferase</fullName>
        <shortName>AadAT</shortName>
    </alternativeName>
    <alternativeName>
        <fullName evidence="3">Glycine transaminase AADAT</fullName>
        <ecNumber evidence="3">2.6.1.4</ecNumber>
    </alternativeName>
    <alternativeName>
        <fullName>Kynurenine aminotransferase II</fullName>
    </alternativeName>
    <alternativeName>
        <fullName evidence="3">Kynurenine--glyoxylate transaminase AADAT</fullName>
        <ecNumber evidence="3">2.6.1.63</ecNumber>
    </alternativeName>
    <alternativeName>
        <fullName>Kynurenine--oxoglutarate aminotransferase II</fullName>
    </alternativeName>
    <alternativeName>
        <fullName>Kynurenine--oxoglutarate transaminase 2</fullName>
        <ecNumber evidence="3">2.6.1.7</ecNumber>
    </alternativeName>
    <alternativeName>
        <fullName>Kynurenine--oxoglutarate transaminase II</fullName>
    </alternativeName>
    <alternativeName>
        <fullName evidence="3">Methionine--glyoxylate transaminase AADAT</fullName>
        <ecNumber evidence="3">2.6.1.73</ecNumber>
    </alternativeName>
</protein>
<gene>
    <name evidence="3" type="primary">AADAT</name>
</gene>